<name>STHA_MARN8</name>
<gene>
    <name evidence="1" type="primary">sthA</name>
    <name type="ordered locus">Maqu_1923</name>
</gene>
<reference key="1">
    <citation type="journal article" date="2011" name="Appl. Environ. Microbiol.">
        <title>Genomic potential of Marinobacter aquaeolei, a biogeochemical 'opportunitroph'.</title>
        <authorList>
            <person name="Singer E."/>
            <person name="Webb E.A."/>
            <person name="Nelson W.C."/>
            <person name="Heidelberg J.F."/>
            <person name="Ivanova N."/>
            <person name="Pati A."/>
            <person name="Edwards K.J."/>
        </authorList>
    </citation>
    <scope>NUCLEOTIDE SEQUENCE [LARGE SCALE GENOMIC DNA]</scope>
    <source>
        <strain>ATCC 700491 / DSM 11845 / VT8</strain>
    </source>
</reference>
<feature type="chain" id="PRO_1000012558" description="Soluble pyridine nucleotide transhydrogenase">
    <location>
        <begin position="1"/>
        <end position="463"/>
    </location>
</feature>
<feature type="binding site" evidence="1">
    <location>
        <begin position="35"/>
        <end position="44"/>
    </location>
    <ligand>
        <name>FAD</name>
        <dbReference type="ChEBI" id="CHEBI:57692"/>
    </ligand>
</feature>
<dbReference type="EC" id="1.6.1.1" evidence="1"/>
<dbReference type="EMBL" id="CP000514">
    <property type="protein sequence ID" value="ABM19004.1"/>
    <property type="molecule type" value="Genomic_DNA"/>
</dbReference>
<dbReference type="RefSeq" id="WP_011785397.1">
    <property type="nucleotide sequence ID" value="NC_008740.1"/>
</dbReference>
<dbReference type="SMR" id="A1U1Y5"/>
<dbReference type="STRING" id="351348.Maqu_1923"/>
<dbReference type="GeneID" id="31820850"/>
<dbReference type="KEGG" id="maq:Maqu_1923"/>
<dbReference type="eggNOG" id="COG1249">
    <property type="taxonomic scope" value="Bacteria"/>
</dbReference>
<dbReference type="HOGENOM" id="CLU_016755_0_0_6"/>
<dbReference type="OrthoDB" id="9800167at2"/>
<dbReference type="Proteomes" id="UP000000998">
    <property type="component" value="Chromosome"/>
</dbReference>
<dbReference type="GO" id="GO:0005829">
    <property type="term" value="C:cytosol"/>
    <property type="evidence" value="ECO:0007669"/>
    <property type="project" value="TreeGrafter"/>
</dbReference>
<dbReference type="GO" id="GO:0004148">
    <property type="term" value="F:dihydrolipoyl dehydrogenase (NADH) activity"/>
    <property type="evidence" value="ECO:0007669"/>
    <property type="project" value="TreeGrafter"/>
</dbReference>
<dbReference type="GO" id="GO:0050660">
    <property type="term" value="F:flavin adenine dinucleotide binding"/>
    <property type="evidence" value="ECO:0007669"/>
    <property type="project" value="TreeGrafter"/>
</dbReference>
<dbReference type="GO" id="GO:0003957">
    <property type="term" value="F:NAD(P)+ transhydrogenase (Si-specific) activity"/>
    <property type="evidence" value="ECO:0007669"/>
    <property type="project" value="UniProtKB-UniRule"/>
</dbReference>
<dbReference type="GO" id="GO:0006103">
    <property type="term" value="P:2-oxoglutarate metabolic process"/>
    <property type="evidence" value="ECO:0007669"/>
    <property type="project" value="TreeGrafter"/>
</dbReference>
<dbReference type="GO" id="GO:0006739">
    <property type="term" value="P:NADP metabolic process"/>
    <property type="evidence" value="ECO:0007669"/>
    <property type="project" value="UniProtKB-UniRule"/>
</dbReference>
<dbReference type="FunFam" id="3.30.390.30:FF:000002">
    <property type="entry name" value="Soluble pyridine nucleotide transhydrogenase"/>
    <property type="match status" value="1"/>
</dbReference>
<dbReference type="FunFam" id="3.50.50.60:FF:000008">
    <property type="entry name" value="Soluble pyridine nucleotide transhydrogenase"/>
    <property type="match status" value="1"/>
</dbReference>
<dbReference type="Gene3D" id="3.30.390.30">
    <property type="match status" value="1"/>
</dbReference>
<dbReference type="Gene3D" id="3.50.50.60">
    <property type="entry name" value="FAD/NAD(P)-binding domain"/>
    <property type="match status" value="2"/>
</dbReference>
<dbReference type="HAMAP" id="MF_00247">
    <property type="entry name" value="SthA"/>
    <property type="match status" value="1"/>
</dbReference>
<dbReference type="InterPro" id="IPR050151">
    <property type="entry name" value="Class-I_Pyr_Nuc-Dis_Oxidored"/>
</dbReference>
<dbReference type="InterPro" id="IPR036188">
    <property type="entry name" value="FAD/NAD-bd_sf"/>
</dbReference>
<dbReference type="InterPro" id="IPR023753">
    <property type="entry name" value="FAD/NAD-binding_dom"/>
</dbReference>
<dbReference type="InterPro" id="IPR016156">
    <property type="entry name" value="FAD/NAD-linked_Rdtase_dimer_sf"/>
</dbReference>
<dbReference type="InterPro" id="IPR001100">
    <property type="entry name" value="Pyr_nuc-diS_OxRdtase"/>
</dbReference>
<dbReference type="InterPro" id="IPR004099">
    <property type="entry name" value="Pyr_nucl-diS_OxRdtase_dimer"/>
</dbReference>
<dbReference type="InterPro" id="IPR022962">
    <property type="entry name" value="STH_gammaproteobact"/>
</dbReference>
<dbReference type="NCBIfam" id="NF003585">
    <property type="entry name" value="PRK05249.1"/>
    <property type="match status" value="1"/>
</dbReference>
<dbReference type="PANTHER" id="PTHR22912">
    <property type="entry name" value="DISULFIDE OXIDOREDUCTASE"/>
    <property type="match status" value="1"/>
</dbReference>
<dbReference type="PANTHER" id="PTHR22912:SF93">
    <property type="entry name" value="SOLUBLE PYRIDINE NUCLEOTIDE TRANSHYDROGENASE"/>
    <property type="match status" value="1"/>
</dbReference>
<dbReference type="Pfam" id="PF07992">
    <property type="entry name" value="Pyr_redox_2"/>
    <property type="match status" value="1"/>
</dbReference>
<dbReference type="Pfam" id="PF02852">
    <property type="entry name" value="Pyr_redox_dim"/>
    <property type="match status" value="1"/>
</dbReference>
<dbReference type="PIRSF" id="PIRSF000350">
    <property type="entry name" value="Mercury_reductase_MerA"/>
    <property type="match status" value="1"/>
</dbReference>
<dbReference type="PRINTS" id="PR00368">
    <property type="entry name" value="FADPNR"/>
</dbReference>
<dbReference type="PRINTS" id="PR00411">
    <property type="entry name" value="PNDRDTASEI"/>
</dbReference>
<dbReference type="SUPFAM" id="SSF51905">
    <property type="entry name" value="FAD/NAD(P)-binding domain"/>
    <property type="match status" value="1"/>
</dbReference>
<dbReference type="SUPFAM" id="SSF55424">
    <property type="entry name" value="FAD/NAD-linked reductases, dimerisation (C-terminal) domain"/>
    <property type="match status" value="1"/>
</dbReference>
<organism>
    <name type="scientific">Marinobacter nauticus (strain ATCC 700491 / DSM 11845 / VT8)</name>
    <name type="common">Marinobacter aquaeolei</name>
    <dbReference type="NCBI Taxonomy" id="351348"/>
    <lineage>
        <taxon>Bacteria</taxon>
        <taxon>Pseudomonadati</taxon>
        <taxon>Pseudomonadota</taxon>
        <taxon>Gammaproteobacteria</taxon>
        <taxon>Pseudomonadales</taxon>
        <taxon>Marinobacteraceae</taxon>
        <taxon>Marinobacter</taxon>
    </lineage>
</organism>
<accession>A1U1Y5</accession>
<evidence type="ECO:0000255" key="1">
    <source>
        <dbReference type="HAMAP-Rule" id="MF_00247"/>
    </source>
</evidence>
<sequence length="463" mass="51452">MAEHHYDVVVIGAGPSGEGAAMNAAKHNRRVAIIEDKPTVGGNCTHWGTIPSKALRHSVKQIITFNTNQMFRDIGEPRWFSFPRVLQNAQKVIGKQVKLRTQFYSRNRVDLINGRAAFVDKHRLEIRGNKSVETIHFKQAIIATGSRPYLPPDVDFRHHRIYNSDSILNLSHTPRTLIIYGAGVIGSEYASIFAGLGVKVDLINPGSRLLSFLDDEISDALSYHLRNNGVLVRHNEQYESVKGDDHGVVLSLQSGKKIRADAFLWCNGRSGNTENLGLENVGLTPNSRGQLAVDEHYRTEVEHIYAAGDVIGWPSLASAAYDQGRAASSDITQDEYFRFVDDVPTGIYTIPEISSVGKTERELTEAKVPYDVGQAFFKDLARAQITGEAVGMLKILFHRETREILGIHCFGDQAAEIVHIGQAIMNQEGEANSLNYFINTTFNYPTMAEAYRVAALNGLNRIF</sequence>
<keyword id="KW-0963">Cytoplasm</keyword>
<keyword id="KW-0274">FAD</keyword>
<keyword id="KW-0285">Flavoprotein</keyword>
<keyword id="KW-0520">NAD</keyword>
<keyword id="KW-0521">NADP</keyword>
<keyword id="KW-0560">Oxidoreductase</keyword>
<protein>
    <recommendedName>
        <fullName evidence="1">Soluble pyridine nucleotide transhydrogenase</fullName>
        <shortName evidence="1">STH</shortName>
        <ecNumber evidence="1">1.6.1.1</ecNumber>
    </recommendedName>
    <alternativeName>
        <fullName evidence="1">NAD(P)(+) transhydrogenase [B-specific]</fullName>
    </alternativeName>
</protein>
<comment type="function">
    <text evidence="1">Conversion of NADPH, generated by peripheral catabolic pathways, to NADH, which can enter the respiratory chain for energy generation.</text>
</comment>
<comment type="catalytic activity">
    <reaction evidence="1">
        <text>NAD(+) + NADPH = NADH + NADP(+)</text>
        <dbReference type="Rhea" id="RHEA:11692"/>
        <dbReference type="ChEBI" id="CHEBI:57540"/>
        <dbReference type="ChEBI" id="CHEBI:57783"/>
        <dbReference type="ChEBI" id="CHEBI:57945"/>
        <dbReference type="ChEBI" id="CHEBI:58349"/>
        <dbReference type="EC" id="1.6.1.1"/>
    </reaction>
</comment>
<comment type="cofactor">
    <cofactor evidence="1">
        <name>FAD</name>
        <dbReference type="ChEBI" id="CHEBI:57692"/>
    </cofactor>
    <text evidence="1">Binds 1 FAD per subunit.</text>
</comment>
<comment type="subcellular location">
    <subcellularLocation>
        <location evidence="1">Cytoplasm</location>
    </subcellularLocation>
</comment>
<comment type="similarity">
    <text evidence="1">Belongs to the class-I pyridine nucleotide-disulfide oxidoreductase family.</text>
</comment>
<proteinExistence type="inferred from homology"/>